<dbReference type="EC" id="2.7.7.4" evidence="1"/>
<dbReference type="EMBL" id="CP001158">
    <property type="protein sequence ID" value="ACL30219.1"/>
    <property type="molecule type" value="Genomic_DNA"/>
</dbReference>
<dbReference type="RefSeq" id="WP_009874377.1">
    <property type="nucleotide sequence ID" value="NC_011834.1"/>
</dbReference>
<dbReference type="SMR" id="B8D7V4"/>
<dbReference type="KEGG" id="bau:BUAPTUC7_418"/>
<dbReference type="HOGENOM" id="CLU_043026_0_0_6"/>
<dbReference type="UniPathway" id="UPA00140">
    <property type="reaction ID" value="UER00204"/>
</dbReference>
<dbReference type="GO" id="GO:0005524">
    <property type="term" value="F:ATP binding"/>
    <property type="evidence" value="ECO:0007669"/>
    <property type="project" value="UniProtKB-KW"/>
</dbReference>
<dbReference type="GO" id="GO:0004781">
    <property type="term" value="F:sulfate adenylyltransferase (ATP) activity"/>
    <property type="evidence" value="ECO:0007669"/>
    <property type="project" value="UniProtKB-UniRule"/>
</dbReference>
<dbReference type="GO" id="GO:0070814">
    <property type="term" value="P:hydrogen sulfide biosynthetic process"/>
    <property type="evidence" value="ECO:0007669"/>
    <property type="project" value="UniProtKB-UniRule"/>
</dbReference>
<dbReference type="GO" id="GO:0000103">
    <property type="term" value="P:sulfate assimilation"/>
    <property type="evidence" value="ECO:0007669"/>
    <property type="project" value="UniProtKB-UniRule"/>
</dbReference>
<dbReference type="FunFam" id="3.40.50.620:FF:000002">
    <property type="entry name" value="Sulfate adenylyltransferase subunit 2"/>
    <property type="match status" value="1"/>
</dbReference>
<dbReference type="Gene3D" id="3.40.50.620">
    <property type="entry name" value="HUPs"/>
    <property type="match status" value="1"/>
</dbReference>
<dbReference type="HAMAP" id="MF_00064">
    <property type="entry name" value="Sulf_adenylyltr_sub2"/>
    <property type="match status" value="1"/>
</dbReference>
<dbReference type="InterPro" id="IPR002500">
    <property type="entry name" value="PAPS_reduct_dom"/>
</dbReference>
<dbReference type="InterPro" id="IPR014729">
    <property type="entry name" value="Rossmann-like_a/b/a_fold"/>
</dbReference>
<dbReference type="InterPro" id="IPR011784">
    <property type="entry name" value="SO4_adenylTrfase_ssu"/>
</dbReference>
<dbReference type="InterPro" id="IPR050128">
    <property type="entry name" value="Sulfate_adenylyltrnsfr_sub2"/>
</dbReference>
<dbReference type="NCBIfam" id="TIGR02039">
    <property type="entry name" value="CysD"/>
    <property type="match status" value="1"/>
</dbReference>
<dbReference type="NCBIfam" id="NF003587">
    <property type="entry name" value="PRK05253.1"/>
    <property type="match status" value="1"/>
</dbReference>
<dbReference type="NCBIfam" id="NF009214">
    <property type="entry name" value="PRK12563.1"/>
    <property type="match status" value="1"/>
</dbReference>
<dbReference type="PANTHER" id="PTHR43196">
    <property type="entry name" value="SULFATE ADENYLYLTRANSFERASE SUBUNIT 2"/>
    <property type="match status" value="1"/>
</dbReference>
<dbReference type="PANTHER" id="PTHR43196:SF1">
    <property type="entry name" value="SULFATE ADENYLYLTRANSFERASE SUBUNIT 2"/>
    <property type="match status" value="1"/>
</dbReference>
<dbReference type="Pfam" id="PF01507">
    <property type="entry name" value="PAPS_reduct"/>
    <property type="match status" value="1"/>
</dbReference>
<dbReference type="PIRSF" id="PIRSF002936">
    <property type="entry name" value="CysDAde_trans"/>
    <property type="match status" value="1"/>
</dbReference>
<dbReference type="SUPFAM" id="SSF52402">
    <property type="entry name" value="Adenine nucleotide alpha hydrolases-like"/>
    <property type="match status" value="1"/>
</dbReference>
<sequence>MFKKNTTHLRQLESESIYIMREVMSDFQNPVMLYSIGKDSSVMLHLAKKSFYPGTIPFPLLHIDTGWKFKEMYIFRDHIASTSNIELIVHSHSKGKLLGLNPFENGGSKYTDIMKTEGLKEAINKYNFDAAFGGARRDEEKSRSKERIYSFRDSLHQWDPKKQRPELWWNYNGQINKGENIRVFPLSNWTELDIWQYIFLEKIEIVPLYFAAKRPVLERNGVLTVIDDSRMKIKSNEVIKEKMVRFRTLGCWPLTNAIESEARNVEDIIKETLIVKTSERTGRAIDYDQKSSMEFKKRQGYF</sequence>
<feature type="chain" id="PRO_1000117938" description="Sulfate adenylyltransferase subunit 2">
    <location>
        <begin position="1"/>
        <end position="302"/>
    </location>
</feature>
<accession>B8D7V4</accession>
<organism>
    <name type="scientific">Buchnera aphidicola subsp. Acyrthosiphon pisum (strain Tuc7)</name>
    <dbReference type="NCBI Taxonomy" id="561501"/>
    <lineage>
        <taxon>Bacteria</taxon>
        <taxon>Pseudomonadati</taxon>
        <taxon>Pseudomonadota</taxon>
        <taxon>Gammaproteobacteria</taxon>
        <taxon>Enterobacterales</taxon>
        <taxon>Erwiniaceae</taxon>
        <taxon>Buchnera</taxon>
    </lineage>
</organism>
<keyword id="KW-0067">ATP-binding</keyword>
<keyword id="KW-0547">Nucleotide-binding</keyword>
<keyword id="KW-0548">Nucleotidyltransferase</keyword>
<keyword id="KW-0808">Transferase</keyword>
<protein>
    <recommendedName>
        <fullName evidence="1">Sulfate adenylyltransferase subunit 2</fullName>
        <ecNumber evidence="1">2.7.7.4</ecNumber>
    </recommendedName>
    <alternativeName>
        <fullName evidence="1">ATP-sulfurylase small subunit</fullName>
    </alternativeName>
    <alternativeName>
        <fullName evidence="1">Sulfate adenylate transferase</fullName>
        <shortName evidence="1">SAT</shortName>
    </alternativeName>
</protein>
<gene>
    <name evidence="1" type="primary">cysD</name>
    <name type="ordered locus">BUAPTUC7_418</name>
</gene>
<evidence type="ECO:0000255" key="1">
    <source>
        <dbReference type="HAMAP-Rule" id="MF_00064"/>
    </source>
</evidence>
<reference key="1">
    <citation type="journal article" date="2009" name="Science">
        <title>The dynamics and time scale of ongoing genomic erosion in symbiotic bacteria.</title>
        <authorList>
            <person name="Moran N.A."/>
            <person name="McLaughlin H.J."/>
            <person name="Sorek R."/>
        </authorList>
    </citation>
    <scope>NUCLEOTIDE SEQUENCE [LARGE SCALE GENOMIC DNA]</scope>
    <source>
        <strain>Tuc7</strain>
    </source>
</reference>
<comment type="function">
    <text evidence="1">With CysN forms the ATP sulfurylase (ATPS) that catalyzes the adenylation of sulfate producing adenosine 5'-phosphosulfate (APS) and diphosphate, the first enzymatic step in sulfur assimilation pathway. APS synthesis involves the formation of a high-energy phosphoric-sulfuric acid anhydride bond driven by GTP hydrolysis by CysN coupled to ATP hydrolysis by CysD.</text>
</comment>
<comment type="catalytic activity">
    <reaction evidence="1">
        <text>sulfate + ATP + H(+) = adenosine 5'-phosphosulfate + diphosphate</text>
        <dbReference type="Rhea" id="RHEA:18133"/>
        <dbReference type="ChEBI" id="CHEBI:15378"/>
        <dbReference type="ChEBI" id="CHEBI:16189"/>
        <dbReference type="ChEBI" id="CHEBI:30616"/>
        <dbReference type="ChEBI" id="CHEBI:33019"/>
        <dbReference type="ChEBI" id="CHEBI:58243"/>
        <dbReference type="EC" id="2.7.7.4"/>
    </reaction>
</comment>
<comment type="pathway">
    <text evidence="1">Sulfur metabolism; hydrogen sulfide biosynthesis; sulfite from sulfate: step 1/3.</text>
</comment>
<comment type="subunit">
    <text evidence="1">Heterodimer composed of CysD, the smaller subunit, and CysN.</text>
</comment>
<comment type="similarity">
    <text evidence="1">Belongs to the PAPS reductase family. CysD subfamily.</text>
</comment>
<name>CYSD_BUCAT</name>
<proteinExistence type="inferred from homology"/>